<evidence type="ECO:0000250" key="1">
    <source>
        <dbReference type="UniProtKB" id="P18079"/>
    </source>
</evidence>
<evidence type="ECO:0000250" key="2">
    <source>
        <dbReference type="UniProtKB" id="P22557"/>
    </source>
</evidence>
<evidence type="ECO:0000305" key="3"/>
<name>HEM0_BOVIN</name>
<proteinExistence type="evidence at transcript level"/>
<keyword id="KW-0012">Acyltransferase</keyword>
<keyword id="KW-0350">Heme biosynthesis</keyword>
<keyword id="KW-0472">Membrane</keyword>
<keyword id="KW-0496">Mitochondrion</keyword>
<keyword id="KW-0999">Mitochondrion inner membrane</keyword>
<keyword id="KW-0663">Pyridoxal phosphate</keyword>
<keyword id="KW-1185">Reference proteome</keyword>
<keyword id="KW-0808">Transferase</keyword>
<keyword id="KW-0809">Transit peptide</keyword>
<gene>
    <name type="primary">ALAS2</name>
</gene>
<comment type="function">
    <text evidence="2">Catalyzes the pyridoxal 5'-phosphate (PLP)-dependent condensation of succinyl-CoA and glycine to form aminolevulinic acid (ALA), with CoA and CO2 as by-products (By similarity). Contributes significantly to heme formation during erythropoiesis (By similarity).</text>
</comment>
<comment type="catalytic activity">
    <reaction evidence="2">
        <text>succinyl-CoA + glycine + H(+) = 5-aminolevulinate + CO2 + CoA</text>
        <dbReference type="Rhea" id="RHEA:12921"/>
        <dbReference type="ChEBI" id="CHEBI:15378"/>
        <dbReference type="ChEBI" id="CHEBI:16526"/>
        <dbReference type="ChEBI" id="CHEBI:57287"/>
        <dbReference type="ChEBI" id="CHEBI:57292"/>
        <dbReference type="ChEBI" id="CHEBI:57305"/>
        <dbReference type="ChEBI" id="CHEBI:356416"/>
        <dbReference type="EC" id="2.3.1.37"/>
    </reaction>
    <physiologicalReaction direction="left-to-right" evidence="2">
        <dbReference type="Rhea" id="RHEA:12922"/>
    </physiologicalReaction>
</comment>
<comment type="cofactor">
    <cofactor evidence="2">
        <name>pyridoxal 5'-phosphate</name>
        <dbReference type="ChEBI" id="CHEBI:597326"/>
    </cofactor>
</comment>
<comment type="pathway">
    <text evidence="2">Porphyrin-containing compound metabolism; protoporphyrin-IX biosynthesis; 5-aminolevulinate from glycine: step 1/1.</text>
</comment>
<comment type="subunit">
    <text evidence="2">Homodimer. Interacts with SUCLA2.</text>
</comment>
<comment type="subcellular location">
    <subcellularLocation>
        <location evidence="2">Mitochondrion inner membrane</location>
        <topology evidence="2">Peripheral membrane protein</topology>
    </subcellularLocation>
    <text evidence="2">Localizes to the matrix side of the mitochondrion inner membrane.</text>
</comment>
<comment type="domain">
    <text evidence="2">C-terminus is a mobile self-inhibitory loop which interferes directly with active site.</text>
</comment>
<comment type="similarity">
    <text evidence="3">Belongs to the class-II pyridoxal-phosphate-dependent aminotransferase family.</text>
</comment>
<sequence length="587" mass="65137">MVTAAMLLQRCPVLIRSPTGLLGKMIKTHQFLFGIGRCPILATQGPSFSQIHLKATKAGGDSPSWAKSHCPFMLLELQDGKSKIVQKAAPEVQEDVKTFKTDLPTSLASTSLKKTFSSPQEPEKNSEKVTHLIQNNMAGDHVFGYDQFFRDKIMEKKQDHTYRVFKTVNRWADAYPFAEHFFEASVASKDVSVWCSNDYLGMSRHPRVLQATQEILQRHGAGAGGTRNISGTSKFHVELEQELAELHQKDSALLFSSCFVANDSTLFTLAKILPGCEIYSDAGNHASMIQGIRNSGAAKFVFRHNDPDHLKKLLKKSNPETPKIVAFETVHSMDGAICPLEELCDVAHQYGALTFVDEVHAVGLYGSRGAGIGERDGIMHKIDIISGTLGKAFGCVGGYIASTRDLVDMVRSYAAGFIFTTSLPPMVLSGALESVRLLKGEEGQALRRAHQRNVKHMRQLLMDRGLPVIPCPSHIIPIRVGDAMLNTRICDLLLSKYGIYVQAINYPTVPRGEELLRLAPSPHHSPQMMEDFVEKLLEAWTEVGLPLQDISIAACNFCRRPVHFELMSEWERSYFGNMGPQYVTTYA</sequence>
<accession>Q3ZC31</accession>
<protein>
    <recommendedName>
        <fullName>5-aminolevulinate synthase, erythroid-specific, mitochondrial</fullName>
        <shortName>ALAS-E</shortName>
        <ecNumber evidence="2">2.3.1.37</ecNumber>
    </recommendedName>
    <alternativeName>
        <fullName>5-aminolevulinic acid synthase 2</fullName>
    </alternativeName>
    <alternativeName>
        <fullName>Delta-ALA synthase 2</fullName>
    </alternativeName>
    <alternativeName>
        <fullName>Delta-aminolevulinate synthase 2</fullName>
    </alternativeName>
</protein>
<reference key="1">
    <citation type="submission" date="2005-08" db="EMBL/GenBank/DDBJ databases">
        <authorList>
            <consortium name="NIH - Mammalian Gene Collection (MGC) project"/>
        </authorList>
    </citation>
    <scope>NUCLEOTIDE SEQUENCE [LARGE SCALE MRNA]</scope>
    <source>
        <strain>Hereford</strain>
        <tissue>Fetal liver</tissue>
    </source>
</reference>
<dbReference type="EC" id="2.3.1.37" evidence="2"/>
<dbReference type="EMBL" id="BC102938">
    <property type="protein sequence ID" value="AAI02939.1"/>
    <property type="molecule type" value="mRNA"/>
</dbReference>
<dbReference type="RefSeq" id="NP_001030275.1">
    <property type="nucleotide sequence ID" value="NM_001035103.2"/>
</dbReference>
<dbReference type="SMR" id="Q3ZC31"/>
<dbReference type="FunCoup" id="Q3ZC31">
    <property type="interactions" value="978"/>
</dbReference>
<dbReference type="STRING" id="9913.ENSBTAP00000067103"/>
<dbReference type="PaxDb" id="9913-ENSBTAP00000017538"/>
<dbReference type="Ensembl" id="ENSBTAT00000017538.4">
    <property type="protein sequence ID" value="ENSBTAP00000017538.3"/>
    <property type="gene ID" value="ENSBTAG00000013178.5"/>
</dbReference>
<dbReference type="GeneID" id="511791"/>
<dbReference type="KEGG" id="bta:511791"/>
<dbReference type="CTD" id="212"/>
<dbReference type="VEuPathDB" id="HostDB:ENSBTAG00000013178"/>
<dbReference type="VGNC" id="VGNC:25804">
    <property type="gene designation" value="ALAS2"/>
</dbReference>
<dbReference type="eggNOG" id="KOG1360">
    <property type="taxonomic scope" value="Eukaryota"/>
</dbReference>
<dbReference type="GeneTree" id="ENSGT00940000159912"/>
<dbReference type="HOGENOM" id="CLU_015846_6_1_1"/>
<dbReference type="InParanoid" id="Q3ZC31"/>
<dbReference type="OrthoDB" id="10263824at2759"/>
<dbReference type="TreeFam" id="TF300724"/>
<dbReference type="Reactome" id="R-BTA-189451">
    <property type="pathway name" value="Heme biosynthesis"/>
</dbReference>
<dbReference type="UniPathway" id="UPA00251">
    <property type="reaction ID" value="UER00375"/>
</dbReference>
<dbReference type="Proteomes" id="UP000009136">
    <property type="component" value="Chromosome X"/>
</dbReference>
<dbReference type="Bgee" id="ENSBTAG00000013178">
    <property type="expression patterns" value="Expressed in adrenal gland and 33 other cell types or tissues"/>
</dbReference>
<dbReference type="GO" id="GO:0005743">
    <property type="term" value="C:mitochondrial inner membrane"/>
    <property type="evidence" value="ECO:0000250"/>
    <property type="project" value="UniProtKB"/>
</dbReference>
<dbReference type="GO" id="GO:0005759">
    <property type="term" value="C:mitochondrial matrix"/>
    <property type="evidence" value="ECO:0007669"/>
    <property type="project" value="InterPro"/>
</dbReference>
<dbReference type="GO" id="GO:0005739">
    <property type="term" value="C:mitochondrion"/>
    <property type="evidence" value="ECO:0000318"/>
    <property type="project" value="GO_Central"/>
</dbReference>
<dbReference type="GO" id="GO:0003870">
    <property type="term" value="F:5-aminolevulinate synthase activity"/>
    <property type="evidence" value="ECO:0000250"/>
    <property type="project" value="UniProtKB"/>
</dbReference>
<dbReference type="GO" id="GO:0030170">
    <property type="term" value="F:pyridoxal phosphate binding"/>
    <property type="evidence" value="ECO:0007669"/>
    <property type="project" value="InterPro"/>
</dbReference>
<dbReference type="GO" id="GO:0048821">
    <property type="term" value="P:erythrocyte development"/>
    <property type="evidence" value="ECO:0000318"/>
    <property type="project" value="GO_Central"/>
</dbReference>
<dbReference type="GO" id="GO:0006783">
    <property type="term" value="P:heme biosynthetic process"/>
    <property type="evidence" value="ECO:0000318"/>
    <property type="project" value="GO_Central"/>
</dbReference>
<dbReference type="GO" id="GO:0042541">
    <property type="term" value="P:hemoglobin biosynthetic process"/>
    <property type="evidence" value="ECO:0000318"/>
    <property type="project" value="GO_Central"/>
</dbReference>
<dbReference type="GO" id="GO:0006782">
    <property type="term" value="P:protoporphyrinogen IX biosynthetic process"/>
    <property type="evidence" value="ECO:0007669"/>
    <property type="project" value="UniProtKB-UniPathway"/>
</dbReference>
<dbReference type="GO" id="GO:0001666">
    <property type="term" value="P:response to hypoxia"/>
    <property type="evidence" value="ECO:0000250"/>
    <property type="project" value="UniProtKB"/>
</dbReference>
<dbReference type="CDD" id="cd06454">
    <property type="entry name" value="KBL_like"/>
    <property type="match status" value="1"/>
</dbReference>
<dbReference type="FunFam" id="3.90.1150.10:FF:000029">
    <property type="entry name" value="5-aminolevulinate synthase"/>
    <property type="match status" value="1"/>
</dbReference>
<dbReference type="FunFam" id="4.10.92.10:FF:000001">
    <property type="entry name" value="5-aminolevulinate synthase"/>
    <property type="match status" value="1"/>
</dbReference>
<dbReference type="FunFam" id="3.40.640.10:FF:000006">
    <property type="entry name" value="5-aminolevulinate synthase, mitochondrial"/>
    <property type="match status" value="1"/>
</dbReference>
<dbReference type="Gene3D" id="4.10.92.10">
    <property type="entry name" value="Aminolevulinic Acid Synthase 2"/>
    <property type="match status" value="1"/>
</dbReference>
<dbReference type="Gene3D" id="3.90.1150.10">
    <property type="entry name" value="Aspartate Aminotransferase, domain 1"/>
    <property type="match status" value="1"/>
</dbReference>
<dbReference type="Gene3D" id="3.40.640.10">
    <property type="entry name" value="Type I PLP-dependent aspartate aminotransferase-like (Major domain)"/>
    <property type="match status" value="1"/>
</dbReference>
<dbReference type="InterPro" id="IPR010961">
    <property type="entry name" value="4pyrrol_synth_NH2levulA_synth"/>
</dbReference>
<dbReference type="InterPro" id="IPR015118">
    <property type="entry name" value="5aminolev_synth_preseq"/>
</dbReference>
<dbReference type="InterPro" id="IPR001917">
    <property type="entry name" value="Aminotrans_II_pyridoxalP_BS"/>
</dbReference>
<dbReference type="InterPro" id="IPR004839">
    <property type="entry name" value="Aminotransferase_I/II_large"/>
</dbReference>
<dbReference type="InterPro" id="IPR050087">
    <property type="entry name" value="AON_synthase_class-II"/>
</dbReference>
<dbReference type="InterPro" id="IPR015424">
    <property type="entry name" value="PyrdxlP-dep_Trfase"/>
</dbReference>
<dbReference type="InterPro" id="IPR015421">
    <property type="entry name" value="PyrdxlP-dep_Trfase_major"/>
</dbReference>
<dbReference type="InterPro" id="IPR015422">
    <property type="entry name" value="PyrdxlP-dep_Trfase_small"/>
</dbReference>
<dbReference type="NCBIfam" id="TIGR01821">
    <property type="entry name" value="5aminolev_synth"/>
    <property type="match status" value="1"/>
</dbReference>
<dbReference type="PANTHER" id="PTHR13693:SF58">
    <property type="entry name" value="5-AMINOLEVULINATE SYNTHASE, ERYTHROID-SPECIFIC, MITOCHONDRIAL"/>
    <property type="match status" value="1"/>
</dbReference>
<dbReference type="PANTHER" id="PTHR13693">
    <property type="entry name" value="CLASS II AMINOTRANSFERASE/8-AMINO-7-OXONONANOATE SYNTHASE"/>
    <property type="match status" value="1"/>
</dbReference>
<dbReference type="Pfam" id="PF00155">
    <property type="entry name" value="Aminotran_1_2"/>
    <property type="match status" value="1"/>
</dbReference>
<dbReference type="Pfam" id="PF09029">
    <property type="entry name" value="Preseq_ALAS"/>
    <property type="match status" value="1"/>
</dbReference>
<dbReference type="SUPFAM" id="SSF53383">
    <property type="entry name" value="PLP-dependent transferases"/>
    <property type="match status" value="1"/>
</dbReference>
<dbReference type="PROSITE" id="PS00599">
    <property type="entry name" value="AA_TRANSFER_CLASS_2"/>
    <property type="match status" value="1"/>
</dbReference>
<organism>
    <name type="scientific">Bos taurus</name>
    <name type="common">Bovine</name>
    <dbReference type="NCBI Taxonomy" id="9913"/>
    <lineage>
        <taxon>Eukaryota</taxon>
        <taxon>Metazoa</taxon>
        <taxon>Chordata</taxon>
        <taxon>Craniata</taxon>
        <taxon>Vertebrata</taxon>
        <taxon>Euteleostomi</taxon>
        <taxon>Mammalia</taxon>
        <taxon>Eutheria</taxon>
        <taxon>Laurasiatheria</taxon>
        <taxon>Artiodactyla</taxon>
        <taxon>Ruminantia</taxon>
        <taxon>Pecora</taxon>
        <taxon>Bovidae</taxon>
        <taxon>Bovinae</taxon>
        <taxon>Bos</taxon>
    </lineage>
</organism>
<feature type="transit peptide" description="Mitochondrion" evidence="2">
    <location>
        <begin position="1"/>
        <end position="49"/>
    </location>
</feature>
<feature type="chain" id="PRO_0000280705" description="5-aminolevulinate synthase, erythroid-specific, mitochondrial">
    <location>
        <begin position="50"/>
        <end position="587"/>
    </location>
</feature>
<feature type="active site" evidence="1">
    <location>
        <position position="391"/>
    </location>
</feature>
<feature type="binding site" evidence="1">
    <location>
        <position position="163"/>
    </location>
    <ligand>
        <name>succinyl-CoA</name>
        <dbReference type="ChEBI" id="CHEBI:57292"/>
    </ligand>
</feature>
<feature type="binding site" description="in other chain" evidence="2">
    <location>
        <position position="258"/>
    </location>
    <ligand>
        <name>pyridoxal 5'-phosphate</name>
        <dbReference type="ChEBI" id="CHEBI:597326"/>
        <note>ligand shared between dimeric partners</note>
    </ligand>
</feature>
<feature type="binding site" description="in other chain" evidence="2">
    <location>
        <position position="259"/>
    </location>
    <ligand>
        <name>pyridoxal 5'-phosphate</name>
        <dbReference type="ChEBI" id="CHEBI:597326"/>
        <note>ligand shared between dimeric partners</note>
    </ligand>
</feature>
<feature type="binding site" evidence="1">
    <location>
        <position position="280"/>
    </location>
    <ligand>
        <name>succinyl-CoA</name>
        <dbReference type="ChEBI" id="CHEBI:57292"/>
    </ligand>
</feature>
<feature type="binding site" evidence="1">
    <location>
        <position position="299"/>
    </location>
    <ligand>
        <name>succinyl-CoA</name>
        <dbReference type="ChEBI" id="CHEBI:57292"/>
    </ligand>
</feature>
<feature type="binding site" description="in other chain" evidence="1">
    <location>
        <position position="332"/>
    </location>
    <ligand>
        <name>pyridoxal 5'-phosphate</name>
        <dbReference type="ChEBI" id="CHEBI:597326"/>
        <note>ligand shared between dimeric partners</note>
    </ligand>
</feature>
<feature type="binding site" description="in other chain" evidence="2">
    <location>
        <position position="360"/>
    </location>
    <ligand>
        <name>pyridoxal 5'-phosphate</name>
        <dbReference type="ChEBI" id="CHEBI:597326"/>
        <note>ligand shared between dimeric partners</note>
    </ligand>
</feature>
<feature type="binding site" description="in other chain" evidence="2">
    <location>
        <position position="388"/>
    </location>
    <ligand>
        <name>pyridoxal 5'-phosphate</name>
        <dbReference type="ChEBI" id="CHEBI:597326"/>
        <note>ligand shared between dimeric partners</note>
    </ligand>
</feature>
<feature type="binding site" evidence="2">
    <location>
        <position position="420"/>
    </location>
    <ligand>
        <name>pyridoxal 5'-phosphate</name>
        <dbReference type="ChEBI" id="CHEBI:597326"/>
        <note>ligand shared between dimeric partners</note>
    </ligand>
</feature>
<feature type="binding site" evidence="2">
    <location>
        <position position="421"/>
    </location>
    <ligand>
        <name>pyridoxal 5'-phosphate</name>
        <dbReference type="ChEBI" id="CHEBI:597326"/>
        <note>ligand shared between dimeric partners</note>
    </ligand>
</feature>
<feature type="binding site" evidence="1">
    <location>
        <position position="508"/>
    </location>
    <ligand>
        <name>succinyl-CoA</name>
        <dbReference type="ChEBI" id="CHEBI:57292"/>
    </ligand>
</feature>
<feature type="modified residue" description="N6-(pyridoxal phosphate)lysine" evidence="2">
    <location>
        <position position="391"/>
    </location>
</feature>